<dbReference type="EC" id="1.-.-.-" evidence="7"/>
<dbReference type="EMBL" id="HF679025">
    <property type="protein sequence ID" value="CCT65288.1"/>
    <property type="molecule type" value="Genomic_DNA"/>
</dbReference>
<dbReference type="SMR" id="S0DXU0"/>
<dbReference type="STRING" id="1279085.S0DXU0"/>
<dbReference type="EnsemblFungi" id="CCT65288">
    <property type="protein sequence ID" value="CCT65288"/>
    <property type="gene ID" value="FFUJ_02221"/>
</dbReference>
<dbReference type="VEuPathDB" id="FungiDB:FFUJ_02221"/>
<dbReference type="HOGENOM" id="CLU_026673_16_1_1"/>
<dbReference type="Proteomes" id="UP000016800">
    <property type="component" value="Chromosome 3"/>
</dbReference>
<dbReference type="GO" id="GO:0000166">
    <property type="term" value="F:nucleotide binding"/>
    <property type="evidence" value="ECO:0007669"/>
    <property type="project" value="UniProtKB-KW"/>
</dbReference>
<dbReference type="GO" id="GO:0016651">
    <property type="term" value="F:oxidoreductase activity, acting on NAD(P)H"/>
    <property type="evidence" value="ECO:0007669"/>
    <property type="project" value="InterPro"/>
</dbReference>
<dbReference type="CDD" id="cd08249">
    <property type="entry name" value="enoyl_reductase_like"/>
    <property type="match status" value="1"/>
</dbReference>
<dbReference type="Gene3D" id="3.90.180.10">
    <property type="entry name" value="Medium-chain alcohol dehydrogenases, catalytic domain"/>
    <property type="match status" value="1"/>
</dbReference>
<dbReference type="Gene3D" id="3.40.50.720">
    <property type="entry name" value="NAD(P)-binding Rossmann-like Domain"/>
    <property type="match status" value="1"/>
</dbReference>
<dbReference type="InterPro" id="IPR013149">
    <property type="entry name" value="ADH-like_C"/>
</dbReference>
<dbReference type="InterPro" id="IPR013154">
    <property type="entry name" value="ADH-like_N"/>
</dbReference>
<dbReference type="InterPro" id="IPR011032">
    <property type="entry name" value="GroES-like_sf"/>
</dbReference>
<dbReference type="InterPro" id="IPR036291">
    <property type="entry name" value="NAD(P)-bd_dom_sf"/>
</dbReference>
<dbReference type="InterPro" id="IPR020843">
    <property type="entry name" value="PKS_ER"/>
</dbReference>
<dbReference type="InterPro" id="IPR047122">
    <property type="entry name" value="Trans-enoyl_RdTase-like"/>
</dbReference>
<dbReference type="PANTHER" id="PTHR45348">
    <property type="entry name" value="HYPOTHETICAL OXIDOREDUCTASE (EUROFUNG)"/>
    <property type="match status" value="1"/>
</dbReference>
<dbReference type="PANTHER" id="PTHR45348:SF1">
    <property type="entry name" value="TRANS-ENOYL REDUCTASE STHE"/>
    <property type="match status" value="1"/>
</dbReference>
<dbReference type="Pfam" id="PF08240">
    <property type="entry name" value="ADH_N"/>
    <property type="match status" value="1"/>
</dbReference>
<dbReference type="Pfam" id="PF00107">
    <property type="entry name" value="ADH_zinc_N"/>
    <property type="match status" value="1"/>
</dbReference>
<dbReference type="SMART" id="SM00829">
    <property type="entry name" value="PKS_ER"/>
    <property type="match status" value="1"/>
</dbReference>
<dbReference type="SUPFAM" id="SSF50129">
    <property type="entry name" value="GroES-like"/>
    <property type="match status" value="1"/>
</dbReference>
<dbReference type="SUPFAM" id="SSF51735">
    <property type="entry name" value="NAD(P)-binding Rossmann-fold domains"/>
    <property type="match status" value="1"/>
</dbReference>
<organism>
    <name type="scientific">Gibberella fujikuroi (strain CBS 195.34 / IMI 58289 / NRRL A-6831)</name>
    <name type="common">Bakanae and foot rot disease fungus</name>
    <name type="synonym">Fusarium fujikuroi</name>
    <dbReference type="NCBI Taxonomy" id="1279085"/>
    <lineage>
        <taxon>Eukaryota</taxon>
        <taxon>Fungi</taxon>
        <taxon>Dikarya</taxon>
        <taxon>Ascomycota</taxon>
        <taxon>Pezizomycotina</taxon>
        <taxon>Sordariomycetes</taxon>
        <taxon>Hypocreomycetidae</taxon>
        <taxon>Hypocreales</taxon>
        <taxon>Nectriaceae</taxon>
        <taxon>Fusarium</taxon>
        <taxon>Fusarium fujikuroi species complex</taxon>
    </lineage>
</organism>
<name>EQXC_GIBF5</name>
<reference key="1">
    <citation type="journal article" date="2013" name="PLoS Pathog.">
        <title>Deciphering the cryptic genome: genome-wide analyses of the rice pathogen Fusarium fujikuroi reveal complex regulation of secondary metabolism and novel metabolites.</title>
        <authorList>
            <person name="Wiemann P."/>
            <person name="Sieber C.M.K."/>
            <person name="von Bargen K.W."/>
            <person name="Studt L."/>
            <person name="Niehaus E.-M."/>
            <person name="Espino J.J."/>
            <person name="Huss K."/>
            <person name="Michielse C.B."/>
            <person name="Albermann S."/>
            <person name="Wagner D."/>
            <person name="Bergner S.V."/>
            <person name="Connolly L.R."/>
            <person name="Fischer A."/>
            <person name="Reuter G."/>
            <person name="Kleigrewe K."/>
            <person name="Bald T."/>
            <person name="Wingfield B.D."/>
            <person name="Ophir R."/>
            <person name="Freeman S."/>
            <person name="Hippler M."/>
            <person name="Smith K.M."/>
            <person name="Brown D.W."/>
            <person name="Proctor R.H."/>
            <person name="Muensterkoetter M."/>
            <person name="Freitag M."/>
            <person name="Humpf H.-U."/>
            <person name="Gueldener U."/>
            <person name="Tudzynski B."/>
        </authorList>
    </citation>
    <scope>NUCLEOTIDE SEQUENCE [LARGE SCALE GENOMIC DNA]</scope>
    <source>
        <strain>CBS 195.34 / IMI 58289 / NRRL A-6831</strain>
    </source>
</reference>
<reference key="2">
    <citation type="journal article" date="2017" name="Toxins">
        <title>Establishment of the inducible Tet-On system for the activation of the silent trichosetin gene cluster in Fusarium fujikuroi.</title>
        <authorList>
            <person name="Janevska S."/>
            <person name="Arndt B."/>
            <person name="Baumann L."/>
            <person name="Apken L.H."/>
            <person name="Mauriz Marques L.M."/>
            <person name="Humpf H.U."/>
            <person name="Tudzynski B."/>
        </authorList>
    </citation>
    <scope>FUNCTION</scope>
    <scope>INDUCTION</scope>
    <scope>DISRUPTION PHENOTYPE</scope>
</reference>
<sequence>MVQRLQSALVGTPEGGIRLSTTEIVPDITGDSVLVKTKAVSVNPVDTKMIGPYVTPGAVAGFDFAGVVEQVGPEATKCDIHVGDRVCTAIMGMNPLDPHVGAFSEYTAAVEWILLKIPPHLSFEEGASLGISFMTTGLALFKSLGLPGNPIEPATEPMPVLVYGGSSATGTAAVQLVKLAGFEPIATCSPRNFDLVKSYGASAVFDYQDPNCTSDIRKHTKNKIKYALDCISTTSSMQFCYQAIGRAGGKYTALEPYSEAVARTRKVVKPDWIMGPQMLGKEIRWPEPHWRPANAEMGEFGVYWTAVLRRLLDKGLIRPHHIVVKQGGLAEVLHGIEDIREKRISGKKLVFQMEI</sequence>
<proteinExistence type="evidence at transcript level"/>
<protein>
    <recommendedName>
        <fullName evidence="5">Trans-enoyl reductase</fullName>
        <shortName evidence="5">ER</shortName>
        <ecNumber evidence="7">1.-.-.-</ecNumber>
    </recommendedName>
    <alternativeName>
        <fullName evidence="5">Trichosetin biosynthesis cluster protein ER</fullName>
    </alternativeName>
</protein>
<evidence type="ECO:0000250" key="1">
    <source>
        <dbReference type="UniProtKB" id="A0A0E4AZP0"/>
    </source>
</evidence>
<evidence type="ECO:0000250" key="2">
    <source>
        <dbReference type="UniProtKB" id="Q9Y7D0"/>
    </source>
</evidence>
<evidence type="ECO:0000255" key="3"/>
<evidence type="ECO:0000269" key="4">
    <source>
    </source>
</evidence>
<evidence type="ECO:0000303" key="5">
    <source>
    </source>
</evidence>
<evidence type="ECO:0000305" key="6"/>
<evidence type="ECO:0000305" key="7">
    <source>
    </source>
</evidence>
<accession>S0DXU0</accession>
<gene>
    <name evidence="5" type="primary">ER</name>
    <name type="ORF">FFUJ_02221</name>
</gene>
<feature type="chain" id="PRO_0000443989" description="Trans-enoyl reductase">
    <location>
        <begin position="1"/>
        <end position="355"/>
    </location>
</feature>
<feature type="binding site" evidence="2">
    <location>
        <begin position="45"/>
        <end position="48"/>
    </location>
    <ligand>
        <name>NADP(+)</name>
        <dbReference type="ChEBI" id="CHEBI:58349"/>
    </ligand>
</feature>
<feature type="binding site" evidence="3">
    <location>
        <begin position="131"/>
        <end position="138"/>
    </location>
    <ligand>
        <name>substrate</name>
    </ligand>
</feature>
<feature type="binding site" evidence="2">
    <location>
        <begin position="166"/>
        <end position="169"/>
    </location>
    <ligand>
        <name>NADP(+)</name>
        <dbReference type="ChEBI" id="CHEBI:58349"/>
    </ligand>
</feature>
<feature type="binding site" evidence="2">
    <location>
        <begin position="189"/>
        <end position="192"/>
    </location>
    <ligand>
        <name>NADP(+)</name>
        <dbReference type="ChEBI" id="CHEBI:58349"/>
    </ligand>
</feature>
<feature type="binding site" evidence="2">
    <location>
        <position position="207"/>
    </location>
    <ligand>
        <name>NADP(+)</name>
        <dbReference type="ChEBI" id="CHEBI:58349"/>
    </ligand>
</feature>
<feature type="binding site" evidence="2">
    <location>
        <begin position="254"/>
        <end position="255"/>
    </location>
    <ligand>
        <name>NADP(+)</name>
        <dbReference type="ChEBI" id="CHEBI:58349"/>
    </ligand>
</feature>
<feature type="binding site" evidence="3">
    <location>
        <begin position="275"/>
        <end position="279"/>
    </location>
    <ligand>
        <name>substrate</name>
    </ligand>
</feature>
<feature type="binding site" evidence="2">
    <location>
        <begin position="344"/>
        <end position="345"/>
    </location>
    <ligand>
        <name>NADP(+)</name>
        <dbReference type="ChEBI" id="CHEBI:58349"/>
    </ligand>
</feature>
<keyword id="KW-0521">NADP</keyword>
<keyword id="KW-0547">Nucleotide-binding</keyword>
<keyword id="KW-0560">Oxidoreductase</keyword>
<keyword id="KW-1185">Reference proteome</keyword>
<comment type="function">
    <text evidence="1 4">Hybrid PKS-NRPS synthetase; part of the gene cluster that mediates the biosynthesis of trichosetin, a trans-fused decalin-containing tetramic acid with antimicrobial activity (PubMed:28379186). The PKS module of PKS-NRPS1 together with the enoylreductase (ER) catalyze the formation of the polyketide unit which is then conjugated to L-serine by the condensation domain of the PKS-NRPS1 NRPS module (By similarity). Activity of the Dieckmann cyclase domain (RED) results in release of the Dieckmann product intermediate (By similarity). Diels-Alderase (DA) is involved in endo-selective Diels-Alder cycloaddition to form the decalin ring, leading to the production of N-desmethylequisetin also called trichosetin (By similarity). The cluster does not contain the equisetin N-methyltransferase and consequently, trichosetin is isolated as final product (PubMed:28379186).</text>
</comment>
<comment type="catalytic activity">
    <reaction evidence="1">
        <text>L-serine + 7 malonyl-CoA + acetyl-CoA + 2 S-adenosyl-L-methionine + ATP + 8 NADPH + 11 H(+) = (5S)-3-[(2E,6R,8E,10E,12E)-2,6-dimethyltetradeca-2,8,10,12-tetraenoyl]-5-(hydroxymethyl)pyrrolidine-2,4-dione + AMP + 2 S-adenosyl-L-homocysteine + 7 CO2 + diphosphate + 8 NADP(+) + 8 CoA + 6 H2O</text>
        <dbReference type="Rhea" id="RHEA:67324"/>
        <dbReference type="ChEBI" id="CHEBI:15377"/>
        <dbReference type="ChEBI" id="CHEBI:15378"/>
        <dbReference type="ChEBI" id="CHEBI:16526"/>
        <dbReference type="ChEBI" id="CHEBI:30616"/>
        <dbReference type="ChEBI" id="CHEBI:33019"/>
        <dbReference type="ChEBI" id="CHEBI:33384"/>
        <dbReference type="ChEBI" id="CHEBI:57287"/>
        <dbReference type="ChEBI" id="CHEBI:57288"/>
        <dbReference type="ChEBI" id="CHEBI:57384"/>
        <dbReference type="ChEBI" id="CHEBI:57783"/>
        <dbReference type="ChEBI" id="CHEBI:57856"/>
        <dbReference type="ChEBI" id="CHEBI:58349"/>
        <dbReference type="ChEBI" id="CHEBI:59789"/>
        <dbReference type="ChEBI" id="CHEBI:169938"/>
        <dbReference type="ChEBI" id="CHEBI:456215"/>
    </reaction>
    <physiologicalReaction direction="left-to-right" evidence="1">
        <dbReference type="Rhea" id="RHEA:67325"/>
    </physiologicalReaction>
</comment>
<comment type="pathway">
    <text evidence="7">Mycotoxin biosynthesis.</text>
</comment>
<comment type="subunit">
    <text evidence="2">Monomer.</text>
</comment>
<comment type="induction">
    <text evidence="4">Expression is positively regulated by the trichosetin cluster-specific transcription activator TF22 (PubMed:28379186).</text>
</comment>
<comment type="disruption phenotype">
    <text evidence="4">Completely abolishes trichosetin production (PubMed:28379186).</text>
</comment>
<comment type="similarity">
    <text evidence="6">Belongs to the zinc-containing alcohol dehydrogenase family.</text>
</comment>